<comment type="function">
    <text evidence="1">Responsible for the release of ribosomes from messenger RNA at the termination of chloroplastic protein biosynthesis.</text>
</comment>
<comment type="subcellular location">
    <subcellularLocation>
        <location evidence="1">Plastid</location>
        <location evidence="1">Chloroplast</location>
    </subcellularLocation>
</comment>
<comment type="similarity">
    <text evidence="3">Belongs to the RRF family.</text>
</comment>
<comment type="sequence caution" evidence="3">
    <conflict type="erroneous gene model prediction">
        <sequence resource="EMBL-CDS" id="CAB86420"/>
    </conflict>
</comment>
<dbReference type="EMBL" id="AL138648">
    <property type="protein sequence ID" value="CAB86420.1"/>
    <property type="status" value="ALT_SEQ"/>
    <property type="molecule type" value="Genomic_DNA"/>
</dbReference>
<dbReference type="EMBL" id="CP002686">
    <property type="protein sequence ID" value="AEE80446.1"/>
    <property type="molecule type" value="Genomic_DNA"/>
</dbReference>
<dbReference type="EMBL" id="AF372883">
    <property type="protein sequence ID" value="AAK49599.1"/>
    <property type="molecule type" value="mRNA"/>
</dbReference>
<dbReference type="EMBL" id="AY056778">
    <property type="protein sequence ID" value="AAL09724.1"/>
    <property type="molecule type" value="mRNA"/>
</dbReference>
<dbReference type="EMBL" id="AY092982">
    <property type="protein sequence ID" value="AAM12981.1"/>
    <property type="molecule type" value="mRNA"/>
</dbReference>
<dbReference type="EMBL" id="BT002678">
    <property type="protein sequence ID" value="AAO11594.1"/>
    <property type="molecule type" value="mRNA"/>
</dbReference>
<dbReference type="RefSeq" id="NP_567141.1">
    <property type="nucleotide sequence ID" value="NM_116184.4"/>
</dbReference>
<dbReference type="SMR" id="Q9M1X0"/>
<dbReference type="BioGRID" id="10808">
    <property type="interactions" value="4"/>
</dbReference>
<dbReference type="FunCoup" id="Q9M1X0">
    <property type="interactions" value="1358"/>
</dbReference>
<dbReference type="STRING" id="3702.Q9M1X0"/>
<dbReference type="iPTMnet" id="Q9M1X0"/>
<dbReference type="MetOSite" id="Q9M1X0"/>
<dbReference type="PaxDb" id="3702-AT3G63190.1"/>
<dbReference type="ProteomicsDB" id="236194"/>
<dbReference type="EnsemblPlants" id="AT3G63190.1">
    <property type="protein sequence ID" value="AT3G63190.1"/>
    <property type="gene ID" value="AT3G63190"/>
</dbReference>
<dbReference type="GeneID" id="825494"/>
<dbReference type="Gramene" id="AT3G63190.1">
    <property type="protein sequence ID" value="AT3G63190.1"/>
    <property type="gene ID" value="AT3G63190"/>
</dbReference>
<dbReference type="KEGG" id="ath:AT3G63190"/>
<dbReference type="Araport" id="AT3G63190"/>
<dbReference type="TAIR" id="AT3G63190">
    <property type="gene designation" value="RRF"/>
</dbReference>
<dbReference type="eggNOG" id="KOG4759">
    <property type="taxonomic scope" value="Eukaryota"/>
</dbReference>
<dbReference type="HOGENOM" id="CLU_073981_3_0_1"/>
<dbReference type="InParanoid" id="Q9M1X0"/>
<dbReference type="OMA" id="FNPMNNG"/>
<dbReference type="PhylomeDB" id="Q9M1X0"/>
<dbReference type="PRO" id="PR:Q9M1X0"/>
<dbReference type="Proteomes" id="UP000006548">
    <property type="component" value="Chromosome 3"/>
</dbReference>
<dbReference type="ExpressionAtlas" id="Q9M1X0">
    <property type="expression patterns" value="baseline and differential"/>
</dbReference>
<dbReference type="GO" id="GO:0009507">
    <property type="term" value="C:chloroplast"/>
    <property type="evidence" value="ECO:0000314"/>
    <property type="project" value="TAIR"/>
</dbReference>
<dbReference type="GO" id="GO:0009570">
    <property type="term" value="C:chloroplast stroma"/>
    <property type="evidence" value="ECO:0007005"/>
    <property type="project" value="TAIR"/>
</dbReference>
<dbReference type="GO" id="GO:0005829">
    <property type="term" value="C:cytosol"/>
    <property type="evidence" value="ECO:0007005"/>
    <property type="project" value="TAIR"/>
</dbReference>
<dbReference type="GO" id="GO:0009579">
    <property type="term" value="C:thylakoid"/>
    <property type="evidence" value="ECO:0007005"/>
    <property type="project" value="TAIR"/>
</dbReference>
<dbReference type="GO" id="GO:0005507">
    <property type="term" value="F:copper ion binding"/>
    <property type="evidence" value="ECO:0007005"/>
    <property type="project" value="TAIR"/>
</dbReference>
<dbReference type="GO" id="GO:0009658">
    <property type="term" value="P:chloroplast organization"/>
    <property type="evidence" value="ECO:0000315"/>
    <property type="project" value="TAIR"/>
</dbReference>
<dbReference type="GO" id="GO:0050832">
    <property type="term" value="P:defense response to fungus"/>
    <property type="evidence" value="ECO:0000314"/>
    <property type="project" value="TAIR"/>
</dbReference>
<dbReference type="GO" id="GO:0009793">
    <property type="term" value="P:embryo development ending in seed dormancy"/>
    <property type="evidence" value="ECO:0000315"/>
    <property type="project" value="TAIR"/>
</dbReference>
<dbReference type="GO" id="GO:0032544">
    <property type="term" value="P:plastid translation"/>
    <property type="evidence" value="ECO:0000315"/>
    <property type="project" value="TAIR"/>
</dbReference>
<dbReference type="CDD" id="cd00520">
    <property type="entry name" value="RRF"/>
    <property type="match status" value="1"/>
</dbReference>
<dbReference type="FunFam" id="3.30.1360.40:FF:000001">
    <property type="entry name" value="Ribosome-recycling factor"/>
    <property type="match status" value="1"/>
</dbReference>
<dbReference type="FunFam" id="1.10.132.20:FF:000017">
    <property type="entry name" value="Ribosome-recycling factor chloroplastic"/>
    <property type="match status" value="1"/>
</dbReference>
<dbReference type="Gene3D" id="3.30.1360.40">
    <property type="match status" value="1"/>
</dbReference>
<dbReference type="Gene3D" id="1.10.132.20">
    <property type="entry name" value="Ribosome-recycling factor"/>
    <property type="match status" value="1"/>
</dbReference>
<dbReference type="HAMAP" id="MF_00040">
    <property type="entry name" value="RRF"/>
    <property type="match status" value="1"/>
</dbReference>
<dbReference type="InterPro" id="IPR002661">
    <property type="entry name" value="Ribosome_recyc_fac"/>
</dbReference>
<dbReference type="InterPro" id="IPR023584">
    <property type="entry name" value="Ribosome_recyc_fac_dom"/>
</dbReference>
<dbReference type="InterPro" id="IPR036191">
    <property type="entry name" value="RRF_sf"/>
</dbReference>
<dbReference type="NCBIfam" id="TIGR00496">
    <property type="entry name" value="frr"/>
    <property type="match status" value="1"/>
</dbReference>
<dbReference type="PANTHER" id="PTHR20982:SF3">
    <property type="entry name" value="MITOCHONDRIAL RIBOSOME RECYCLING FACTOR PSEUDO 1"/>
    <property type="match status" value="1"/>
</dbReference>
<dbReference type="PANTHER" id="PTHR20982">
    <property type="entry name" value="RIBOSOME RECYCLING FACTOR"/>
    <property type="match status" value="1"/>
</dbReference>
<dbReference type="Pfam" id="PF01765">
    <property type="entry name" value="RRF"/>
    <property type="match status" value="1"/>
</dbReference>
<dbReference type="SUPFAM" id="SSF55194">
    <property type="entry name" value="Ribosome recycling factor, RRF"/>
    <property type="match status" value="1"/>
</dbReference>
<feature type="transit peptide" description="Chloroplast" evidence="3">
    <location>
        <begin position="1"/>
        <end position="82"/>
    </location>
</feature>
<feature type="chain" id="PRO_0000282651" description="Ribosome-recycling factor, chloroplastic">
    <location>
        <begin position="83"/>
        <end position="275"/>
    </location>
</feature>
<feature type="coiled-coil region" evidence="2">
    <location>
        <begin position="215"/>
        <end position="271"/>
    </location>
</feature>
<name>RRFC_ARATH</name>
<gene>
    <name type="primary">RRF</name>
    <name type="ordered locus">At3g63190</name>
    <name type="ORF">F16M2_40</name>
</gene>
<organism>
    <name type="scientific">Arabidopsis thaliana</name>
    <name type="common">Mouse-ear cress</name>
    <dbReference type="NCBI Taxonomy" id="3702"/>
    <lineage>
        <taxon>Eukaryota</taxon>
        <taxon>Viridiplantae</taxon>
        <taxon>Streptophyta</taxon>
        <taxon>Embryophyta</taxon>
        <taxon>Tracheophyta</taxon>
        <taxon>Spermatophyta</taxon>
        <taxon>Magnoliopsida</taxon>
        <taxon>eudicotyledons</taxon>
        <taxon>Gunneridae</taxon>
        <taxon>Pentapetalae</taxon>
        <taxon>rosids</taxon>
        <taxon>malvids</taxon>
        <taxon>Brassicales</taxon>
        <taxon>Brassicaceae</taxon>
        <taxon>Camelineae</taxon>
        <taxon>Arabidopsis</taxon>
    </lineage>
</organism>
<keyword id="KW-0150">Chloroplast</keyword>
<keyword id="KW-0175">Coiled coil</keyword>
<keyword id="KW-0934">Plastid</keyword>
<keyword id="KW-0648">Protein biosynthesis</keyword>
<keyword id="KW-1185">Reference proteome</keyword>
<keyword id="KW-0809">Transit peptide</keyword>
<protein>
    <recommendedName>
        <fullName>Ribosome-recycling factor, chloroplastic</fullName>
        <shortName>RRF</shortName>
    </recommendedName>
    <alternativeName>
        <fullName>CpFrr</fullName>
    </alternativeName>
    <alternativeName>
        <fullName>RRFHCP</fullName>
    </alternativeName>
    <alternativeName>
        <fullName>Ribosome-releasing factor, chloroplastic</fullName>
    </alternativeName>
</protein>
<evidence type="ECO:0000250" key="1"/>
<evidence type="ECO:0000255" key="2"/>
<evidence type="ECO:0000305" key="3"/>
<sequence length="275" mass="30422">MAASFSSTAPTTPVLRFRANYSKPLLSLPDSCLRIISSAISPSTRLIACSFKTDKLPLGAGVNLSGGPVVKRSLQKRLVIRSATIEEIEAEKSAIETDVKSKMEKTIETLRTSFNSIRTGRSNAAMLDKIEVEYYGSPVSLKSIAQISTPDGSSLLLQPYDKSSLKAIEKAIVNSDLGVTPNNDGDVIRLSLPPLTSDRRKELSKVVAKQSEEGKVALRNIRRDALKSYDKLEKEKKLSEDNVKDLSSDLQKLIDVYMKKIEELYKQKEKELMKV</sequence>
<accession>Q9M1X0</accession>
<accession>Q93V42</accession>
<reference key="1">
    <citation type="journal article" date="2000" name="Nature">
        <title>Sequence and analysis of chromosome 3 of the plant Arabidopsis thaliana.</title>
        <authorList>
            <person name="Salanoubat M."/>
            <person name="Lemcke K."/>
            <person name="Rieger M."/>
            <person name="Ansorge W."/>
            <person name="Unseld M."/>
            <person name="Fartmann B."/>
            <person name="Valle G."/>
            <person name="Bloecker H."/>
            <person name="Perez-Alonso M."/>
            <person name="Obermaier B."/>
            <person name="Delseny M."/>
            <person name="Boutry M."/>
            <person name="Grivell L.A."/>
            <person name="Mache R."/>
            <person name="Puigdomenech P."/>
            <person name="De Simone V."/>
            <person name="Choisne N."/>
            <person name="Artiguenave F."/>
            <person name="Robert C."/>
            <person name="Brottier P."/>
            <person name="Wincker P."/>
            <person name="Cattolico L."/>
            <person name="Weissenbach J."/>
            <person name="Saurin W."/>
            <person name="Quetier F."/>
            <person name="Schaefer M."/>
            <person name="Mueller-Auer S."/>
            <person name="Gabel C."/>
            <person name="Fuchs M."/>
            <person name="Benes V."/>
            <person name="Wurmbach E."/>
            <person name="Drzonek H."/>
            <person name="Erfle H."/>
            <person name="Jordan N."/>
            <person name="Bangert S."/>
            <person name="Wiedelmann R."/>
            <person name="Kranz H."/>
            <person name="Voss H."/>
            <person name="Holland R."/>
            <person name="Brandt P."/>
            <person name="Nyakatura G."/>
            <person name="Vezzi A."/>
            <person name="D'Angelo M."/>
            <person name="Pallavicini A."/>
            <person name="Toppo S."/>
            <person name="Simionati B."/>
            <person name="Conrad A."/>
            <person name="Hornischer K."/>
            <person name="Kauer G."/>
            <person name="Loehnert T.-H."/>
            <person name="Nordsiek G."/>
            <person name="Reichelt J."/>
            <person name="Scharfe M."/>
            <person name="Schoen O."/>
            <person name="Bargues M."/>
            <person name="Terol J."/>
            <person name="Climent J."/>
            <person name="Navarro P."/>
            <person name="Collado C."/>
            <person name="Perez-Perez A."/>
            <person name="Ottenwaelder B."/>
            <person name="Duchemin D."/>
            <person name="Cooke R."/>
            <person name="Laudie M."/>
            <person name="Berger-Llauro C."/>
            <person name="Purnelle B."/>
            <person name="Masuy D."/>
            <person name="de Haan M."/>
            <person name="Maarse A.C."/>
            <person name="Alcaraz J.-P."/>
            <person name="Cottet A."/>
            <person name="Casacuberta E."/>
            <person name="Monfort A."/>
            <person name="Argiriou A."/>
            <person name="Flores M."/>
            <person name="Liguori R."/>
            <person name="Vitale D."/>
            <person name="Mannhaupt G."/>
            <person name="Haase D."/>
            <person name="Schoof H."/>
            <person name="Rudd S."/>
            <person name="Zaccaria P."/>
            <person name="Mewes H.-W."/>
            <person name="Mayer K.F.X."/>
            <person name="Kaul S."/>
            <person name="Town C.D."/>
            <person name="Koo H.L."/>
            <person name="Tallon L.J."/>
            <person name="Jenkins J."/>
            <person name="Rooney T."/>
            <person name="Rizzo M."/>
            <person name="Walts A."/>
            <person name="Utterback T."/>
            <person name="Fujii C.Y."/>
            <person name="Shea T.P."/>
            <person name="Creasy T.H."/>
            <person name="Haas B."/>
            <person name="Maiti R."/>
            <person name="Wu D."/>
            <person name="Peterson J."/>
            <person name="Van Aken S."/>
            <person name="Pai G."/>
            <person name="Militscher J."/>
            <person name="Sellers P."/>
            <person name="Gill J.E."/>
            <person name="Feldblyum T.V."/>
            <person name="Preuss D."/>
            <person name="Lin X."/>
            <person name="Nierman W.C."/>
            <person name="Salzberg S.L."/>
            <person name="White O."/>
            <person name="Venter J.C."/>
            <person name="Fraser C.M."/>
            <person name="Kaneko T."/>
            <person name="Nakamura Y."/>
            <person name="Sato S."/>
            <person name="Kato T."/>
            <person name="Asamizu E."/>
            <person name="Sasamoto S."/>
            <person name="Kimura T."/>
            <person name="Idesawa K."/>
            <person name="Kawashima K."/>
            <person name="Kishida Y."/>
            <person name="Kiyokawa C."/>
            <person name="Kohara M."/>
            <person name="Matsumoto M."/>
            <person name="Matsuno A."/>
            <person name="Muraki A."/>
            <person name="Nakayama S."/>
            <person name="Nakazaki N."/>
            <person name="Shinpo S."/>
            <person name="Takeuchi C."/>
            <person name="Wada T."/>
            <person name="Watanabe A."/>
            <person name="Yamada M."/>
            <person name="Yasuda M."/>
            <person name="Tabata S."/>
        </authorList>
    </citation>
    <scope>NUCLEOTIDE SEQUENCE [LARGE SCALE GENOMIC DNA]</scope>
    <source>
        <strain>cv. Columbia</strain>
    </source>
</reference>
<reference key="2">
    <citation type="journal article" date="2017" name="Plant J.">
        <title>Araport11: a complete reannotation of the Arabidopsis thaliana reference genome.</title>
        <authorList>
            <person name="Cheng C.Y."/>
            <person name="Krishnakumar V."/>
            <person name="Chan A.P."/>
            <person name="Thibaud-Nissen F."/>
            <person name="Schobel S."/>
            <person name="Town C.D."/>
        </authorList>
    </citation>
    <scope>GENOME REANNOTATION</scope>
    <source>
        <strain>cv. Columbia</strain>
    </source>
</reference>
<reference key="3">
    <citation type="journal article" date="2003" name="Science">
        <title>Empirical analysis of transcriptional activity in the Arabidopsis genome.</title>
        <authorList>
            <person name="Yamada K."/>
            <person name="Lim J."/>
            <person name="Dale J.M."/>
            <person name="Chen H."/>
            <person name="Shinn P."/>
            <person name="Palm C.J."/>
            <person name="Southwick A.M."/>
            <person name="Wu H.C."/>
            <person name="Kim C.J."/>
            <person name="Nguyen M."/>
            <person name="Pham P.K."/>
            <person name="Cheuk R.F."/>
            <person name="Karlin-Newmann G."/>
            <person name="Liu S.X."/>
            <person name="Lam B."/>
            <person name="Sakano H."/>
            <person name="Wu T."/>
            <person name="Yu G."/>
            <person name="Miranda M."/>
            <person name="Quach H.L."/>
            <person name="Tripp M."/>
            <person name="Chang C.H."/>
            <person name="Lee J.M."/>
            <person name="Toriumi M.J."/>
            <person name="Chan M.M."/>
            <person name="Tang C.C."/>
            <person name="Onodera C.S."/>
            <person name="Deng J.M."/>
            <person name="Akiyama K."/>
            <person name="Ansari Y."/>
            <person name="Arakawa T."/>
            <person name="Banh J."/>
            <person name="Banno F."/>
            <person name="Bowser L."/>
            <person name="Brooks S.Y."/>
            <person name="Carninci P."/>
            <person name="Chao Q."/>
            <person name="Choy N."/>
            <person name="Enju A."/>
            <person name="Goldsmith A.D."/>
            <person name="Gurjal M."/>
            <person name="Hansen N.F."/>
            <person name="Hayashizaki Y."/>
            <person name="Johnson-Hopson C."/>
            <person name="Hsuan V.W."/>
            <person name="Iida K."/>
            <person name="Karnes M."/>
            <person name="Khan S."/>
            <person name="Koesema E."/>
            <person name="Ishida J."/>
            <person name="Jiang P.X."/>
            <person name="Jones T."/>
            <person name="Kawai J."/>
            <person name="Kamiya A."/>
            <person name="Meyers C."/>
            <person name="Nakajima M."/>
            <person name="Narusaka M."/>
            <person name="Seki M."/>
            <person name="Sakurai T."/>
            <person name="Satou M."/>
            <person name="Tamse R."/>
            <person name="Vaysberg M."/>
            <person name="Wallender E.K."/>
            <person name="Wong C."/>
            <person name="Yamamura Y."/>
            <person name="Yuan S."/>
            <person name="Shinozaki K."/>
            <person name="Davis R.W."/>
            <person name="Theologis A."/>
            <person name="Ecker J.R."/>
        </authorList>
    </citation>
    <scope>NUCLEOTIDE SEQUENCE [LARGE SCALE MRNA]</scope>
    <source>
        <strain>cv. Columbia</strain>
    </source>
</reference>
<proteinExistence type="evidence at transcript level"/>